<keyword id="KW-0028">Amino-acid biosynthesis</keyword>
<keyword id="KW-0055">Arginine biosynthesis</keyword>
<keyword id="KW-0963">Cytoplasm</keyword>
<keyword id="KW-0238">DNA-binding</keyword>
<keyword id="KW-0678">Repressor</keyword>
<keyword id="KW-0804">Transcription</keyword>
<keyword id="KW-0805">Transcription regulation</keyword>
<dbReference type="EMBL" id="FM211192">
    <property type="protein sequence ID" value="CAR71506.1"/>
    <property type="molecule type" value="Genomic_DNA"/>
</dbReference>
<dbReference type="SMR" id="B8ZRK7"/>
<dbReference type="KEGG" id="mlb:MLBr01411"/>
<dbReference type="HOGENOM" id="CLU_097103_1_1_11"/>
<dbReference type="UniPathway" id="UPA00068"/>
<dbReference type="Proteomes" id="UP000006900">
    <property type="component" value="Chromosome"/>
</dbReference>
<dbReference type="GO" id="GO:0005737">
    <property type="term" value="C:cytoplasm"/>
    <property type="evidence" value="ECO:0007669"/>
    <property type="project" value="UniProtKB-SubCell"/>
</dbReference>
<dbReference type="GO" id="GO:0034618">
    <property type="term" value="F:arginine binding"/>
    <property type="evidence" value="ECO:0007669"/>
    <property type="project" value="InterPro"/>
</dbReference>
<dbReference type="GO" id="GO:0003677">
    <property type="term" value="F:DNA binding"/>
    <property type="evidence" value="ECO:0007669"/>
    <property type="project" value="UniProtKB-KW"/>
</dbReference>
<dbReference type="GO" id="GO:0003700">
    <property type="term" value="F:DNA-binding transcription factor activity"/>
    <property type="evidence" value="ECO:0007669"/>
    <property type="project" value="UniProtKB-UniRule"/>
</dbReference>
<dbReference type="GO" id="GO:0006526">
    <property type="term" value="P:L-arginine biosynthetic process"/>
    <property type="evidence" value="ECO:0007669"/>
    <property type="project" value="UniProtKB-UniPathway"/>
</dbReference>
<dbReference type="GO" id="GO:0051259">
    <property type="term" value="P:protein complex oligomerization"/>
    <property type="evidence" value="ECO:0007669"/>
    <property type="project" value="InterPro"/>
</dbReference>
<dbReference type="GO" id="GO:1900079">
    <property type="term" value="P:regulation of arginine biosynthetic process"/>
    <property type="evidence" value="ECO:0007669"/>
    <property type="project" value="UniProtKB-UniRule"/>
</dbReference>
<dbReference type="FunFam" id="1.10.10.10:FF:000667">
    <property type="entry name" value="Arginine repressor"/>
    <property type="match status" value="1"/>
</dbReference>
<dbReference type="Gene3D" id="3.30.1360.40">
    <property type="match status" value="1"/>
</dbReference>
<dbReference type="Gene3D" id="1.10.10.10">
    <property type="entry name" value="Winged helix-like DNA-binding domain superfamily/Winged helix DNA-binding domain"/>
    <property type="match status" value="1"/>
</dbReference>
<dbReference type="HAMAP" id="MF_00173">
    <property type="entry name" value="Arg_repressor"/>
    <property type="match status" value="1"/>
</dbReference>
<dbReference type="InterPro" id="IPR001669">
    <property type="entry name" value="Arg_repress"/>
</dbReference>
<dbReference type="InterPro" id="IPR020899">
    <property type="entry name" value="Arg_repress_C"/>
</dbReference>
<dbReference type="InterPro" id="IPR036251">
    <property type="entry name" value="Arg_repress_C_sf"/>
</dbReference>
<dbReference type="InterPro" id="IPR020900">
    <property type="entry name" value="Arg_repress_DNA-bd"/>
</dbReference>
<dbReference type="InterPro" id="IPR036388">
    <property type="entry name" value="WH-like_DNA-bd_sf"/>
</dbReference>
<dbReference type="InterPro" id="IPR036390">
    <property type="entry name" value="WH_DNA-bd_sf"/>
</dbReference>
<dbReference type="NCBIfam" id="TIGR01529">
    <property type="entry name" value="argR_whole"/>
    <property type="match status" value="1"/>
</dbReference>
<dbReference type="NCBIfam" id="NF002880">
    <property type="entry name" value="PRK03341.1"/>
    <property type="match status" value="1"/>
</dbReference>
<dbReference type="PANTHER" id="PTHR34471">
    <property type="entry name" value="ARGININE REPRESSOR"/>
    <property type="match status" value="1"/>
</dbReference>
<dbReference type="PANTHER" id="PTHR34471:SF1">
    <property type="entry name" value="ARGININE REPRESSOR"/>
    <property type="match status" value="1"/>
</dbReference>
<dbReference type="Pfam" id="PF01316">
    <property type="entry name" value="Arg_repressor"/>
    <property type="match status" value="1"/>
</dbReference>
<dbReference type="Pfam" id="PF02863">
    <property type="entry name" value="Arg_repressor_C"/>
    <property type="match status" value="1"/>
</dbReference>
<dbReference type="PRINTS" id="PR01467">
    <property type="entry name" value="ARGREPRESSOR"/>
</dbReference>
<dbReference type="SUPFAM" id="SSF55252">
    <property type="entry name" value="C-terminal domain of arginine repressor"/>
    <property type="match status" value="1"/>
</dbReference>
<dbReference type="SUPFAM" id="SSF46785">
    <property type="entry name" value="Winged helix' DNA-binding domain"/>
    <property type="match status" value="1"/>
</dbReference>
<feature type="chain" id="PRO_1000123802" description="Arginine repressor">
    <location>
        <begin position="1"/>
        <end position="167"/>
    </location>
</feature>
<evidence type="ECO:0000255" key="1">
    <source>
        <dbReference type="HAMAP-Rule" id="MF_00173"/>
    </source>
</evidence>
<sequence>MTHGASKTTPETTRAGRQARIVAILSSTSVRSQSELATLLADDGIDVTQATLSRDLEELGAVKLRGADGGVGVYVVPEDGSPVRGVSGGTARLSRLLSELLVSADSSANLAVLRTPPGAADYLASAIDRAALPYVVGTIAGDDTVFVAAREPMTGSELATVLESLNR</sequence>
<comment type="function">
    <text evidence="1">Regulates arginine biosynthesis genes.</text>
</comment>
<comment type="pathway">
    <text>Amino-acid biosynthesis; L-arginine biosynthesis [regulation].</text>
</comment>
<comment type="subcellular location">
    <subcellularLocation>
        <location evidence="1">Cytoplasm</location>
    </subcellularLocation>
</comment>
<comment type="similarity">
    <text evidence="1">Belongs to the ArgR family.</text>
</comment>
<name>ARGR_MYCLB</name>
<accession>B8ZRK7</accession>
<protein>
    <recommendedName>
        <fullName evidence="1">Arginine repressor</fullName>
    </recommendedName>
</protein>
<gene>
    <name evidence="1" type="primary">argR</name>
    <name type="ordered locus">MLBr01411</name>
</gene>
<organism>
    <name type="scientific">Mycobacterium leprae (strain Br4923)</name>
    <dbReference type="NCBI Taxonomy" id="561304"/>
    <lineage>
        <taxon>Bacteria</taxon>
        <taxon>Bacillati</taxon>
        <taxon>Actinomycetota</taxon>
        <taxon>Actinomycetes</taxon>
        <taxon>Mycobacteriales</taxon>
        <taxon>Mycobacteriaceae</taxon>
        <taxon>Mycobacterium</taxon>
    </lineage>
</organism>
<proteinExistence type="inferred from homology"/>
<reference key="1">
    <citation type="journal article" date="2009" name="Nat. Genet.">
        <title>Comparative genomic and phylogeographic analysis of Mycobacterium leprae.</title>
        <authorList>
            <person name="Monot M."/>
            <person name="Honore N."/>
            <person name="Garnier T."/>
            <person name="Zidane N."/>
            <person name="Sherafi D."/>
            <person name="Paniz-Mondolfi A."/>
            <person name="Matsuoka M."/>
            <person name="Taylor G.M."/>
            <person name="Donoghue H.D."/>
            <person name="Bouwman A."/>
            <person name="Mays S."/>
            <person name="Watson C."/>
            <person name="Lockwood D."/>
            <person name="Khamispour A."/>
            <person name="Dowlati Y."/>
            <person name="Jianping S."/>
            <person name="Rea T.H."/>
            <person name="Vera-Cabrera L."/>
            <person name="Stefani M.M."/>
            <person name="Banu S."/>
            <person name="Macdonald M."/>
            <person name="Sapkota B.R."/>
            <person name="Spencer J.S."/>
            <person name="Thomas J."/>
            <person name="Harshman K."/>
            <person name="Singh P."/>
            <person name="Busso P."/>
            <person name="Gattiker A."/>
            <person name="Rougemont J."/>
            <person name="Brennan P.J."/>
            <person name="Cole S.T."/>
        </authorList>
    </citation>
    <scope>NUCLEOTIDE SEQUENCE [LARGE SCALE GENOMIC DNA]</scope>
    <source>
        <strain>Br4923</strain>
    </source>
</reference>